<gene>
    <name evidence="1" type="primary">rlmN</name>
    <name type="ordered locus">CCNA_00133</name>
</gene>
<proteinExistence type="inferred from homology"/>
<comment type="function">
    <text evidence="1">Specifically methylates position 2 of adenine 2503 in 23S rRNA and position 2 of adenine 37 in tRNAs. m2A2503 modification seems to play a crucial role in the proofreading step occurring at the peptidyl transferase center and thus would serve to optimize ribosomal fidelity.</text>
</comment>
<comment type="catalytic activity">
    <reaction evidence="1">
        <text>adenosine(2503) in 23S rRNA + 2 reduced [2Fe-2S]-[ferredoxin] + 2 S-adenosyl-L-methionine = 2-methyladenosine(2503) in 23S rRNA + 5'-deoxyadenosine + L-methionine + 2 oxidized [2Fe-2S]-[ferredoxin] + S-adenosyl-L-homocysteine</text>
        <dbReference type="Rhea" id="RHEA:42916"/>
        <dbReference type="Rhea" id="RHEA-COMP:10000"/>
        <dbReference type="Rhea" id="RHEA-COMP:10001"/>
        <dbReference type="Rhea" id="RHEA-COMP:10152"/>
        <dbReference type="Rhea" id="RHEA-COMP:10282"/>
        <dbReference type="ChEBI" id="CHEBI:17319"/>
        <dbReference type="ChEBI" id="CHEBI:33737"/>
        <dbReference type="ChEBI" id="CHEBI:33738"/>
        <dbReference type="ChEBI" id="CHEBI:57844"/>
        <dbReference type="ChEBI" id="CHEBI:57856"/>
        <dbReference type="ChEBI" id="CHEBI:59789"/>
        <dbReference type="ChEBI" id="CHEBI:74411"/>
        <dbReference type="ChEBI" id="CHEBI:74497"/>
        <dbReference type="EC" id="2.1.1.192"/>
    </reaction>
</comment>
<comment type="catalytic activity">
    <reaction evidence="1">
        <text>adenosine(37) in tRNA + 2 reduced [2Fe-2S]-[ferredoxin] + 2 S-adenosyl-L-methionine = 2-methyladenosine(37) in tRNA + 5'-deoxyadenosine + L-methionine + 2 oxidized [2Fe-2S]-[ferredoxin] + S-adenosyl-L-homocysteine</text>
        <dbReference type="Rhea" id="RHEA:43332"/>
        <dbReference type="Rhea" id="RHEA-COMP:10000"/>
        <dbReference type="Rhea" id="RHEA-COMP:10001"/>
        <dbReference type="Rhea" id="RHEA-COMP:10162"/>
        <dbReference type="Rhea" id="RHEA-COMP:10485"/>
        <dbReference type="ChEBI" id="CHEBI:17319"/>
        <dbReference type="ChEBI" id="CHEBI:33737"/>
        <dbReference type="ChEBI" id="CHEBI:33738"/>
        <dbReference type="ChEBI" id="CHEBI:57844"/>
        <dbReference type="ChEBI" id="CHEBI:57856"/>
        <dbReference type="ChEBI" id="CHEBI:59789"/>
        <dbReference type="ChEBI" id="CHEBI:74411"/>
        <dbReference type="ChEBI" id="CHEBI:74497"/>
        <dbReference type="EC" id="2.1.1.192"/>
    </reaction>
</comment>
<comment type="cofactor">
    <cofactor evidence="1">
        <name>[4Fe-4S] cluster</name>
        <dbReference type="ChEBI" id="CHEBI:49883"/>
    </cofactor>
    <text evidence="1">Binds 1 [4Fe-4S] cluster. The cluster is coordinated with 3 cysteines and an exchangeable S-adenosyl-L-methionine.</text>
</comment>
<comment type="subcellular location">
    <subcellularLocation>
        <location evidence="1">Cytoplasm</location>
    </subcellularLocation>
</comment>
<comment type="miscellaneous">
    <text evidence="1">Reaction proceeds by a ping-pong mechanism involving intermediate methylation of a conserved cysteine residue.</text>
</comment>
<comment type="similarity">
    <text evidence="1">Belongs to the radical SAM superfamily. RlmN family.</text>
</comment>
<accession>B8GXM4</accession>
<keyword id="KW-0004">4Fe-4S</keyword>
<keyword id="KW-0963">Cytoplasm</keyword>
<keyword id="KW-1015">Disulfide bond</keyword>
<keyword id="KW-0408">Iron</keyword>
<keyword id="KW-0411">Iron-sulfur</keyword>
<keyword id="KW-0479">Metal-binding</keyword>
<keyword id="KW-0489">Methyltransferase</keyword>
<keyword id="KW-1185">Reference proteome</keyword>
<keyword id="KW-0698">rRNA processing</keyword>
<keyword id="KW-0949">S-adenosyl-L-methionine</keyword>
<keyword id="KW-0808">Transferase</keyword>
<keyword id="KW-0819">tRNA processing</keyword>
<organism>
    <name type="scientific">Caulobacter vibrioides (strain NA1000 / CB15N)</name>
    <name type="common">Caulobacter crescentus</name>
    <dbReference type="NCBI Taxonomy" id="565050"/>
    <lineage>
        <taxon>Bacteria</taxon>
        <taxon>Pseudomonadati</taxon>
        <taxon>Pseudomonadota</taxon>
        <taxon>Alphaproteobacteria</taxon>
        <taxon>Caulobacterales</taxon>
        <taxon>Caulobacteraceae</taxon>
        <taxon>Caulobacter</taxon>
    </lineage>
</organism>
<evidence type="ECO:0000255" key="1">
    <source>
        <dbReference type="HAMAP-Rule" id="MF_01849"/>
    </source>
</evidence>
<evidence type="ECO:0000255" key="2">
    <source>
        <dbReference type="PROSITE-ProRule" id="PRU01266"/>
    </source>
</evidence>
<protein>
    <recommendedName>
        <fullName evidence="1">Dual-specificity RNA methyltransferase RlmN</fullName>
        <ecNumber evidence="1">2.1.1.192</ecNumber>
    </recommendedName>
    <alternativeName>
        <fullName evidence="1">23S rRNA (adenine(2503)-C(2))-methyltransferase</fullName>
    </alternativeName>
    <alternativeName>
        <fullName evidence="1">23S rRNA m2A2503 methyltransferase</fullName>
    </alternativeName>
    <alternativeName>
        <fullName evidence="1">Ribosomal RNA large subunit methyltransferase N</fullName>
    </alternativeName>
    <alternativeName>
        <fullName evidence="1">tRNA (adenine(37)-C(2))-methyltransferase</fullName>
    </alternativeName>
    <alternativeName>
        <fullName evidence="1">tRNA m2A37 methyltransferase</fullName>
    </alternativeName>
</protein>
<name>RLMN_CAUVN</name>
<feature type="chain" id="PRO_1000188557" description="Dual-specificity RNA methyltransferase RlmN">
    <location>
        <begin position="1"/>
        <end position="404"/>
    </location>
</feature>
<feature type="domain" description="Radical SAM core" evidence="2">
    <location>
        <begin position="125"/>
        <end position="357"/>
    </location>
</feature>
<feature type="active site" description="Proton acceptor" evidence="1">
    <location>
        <position position="118"/>
    </location>
</feature>
<feature type="active site" description="S-methylcysteine intermediate" evidence="1">
    <location>
        <position position="368"/>
    </location>
</feature>
<feature type="binding site" evidence="1">
    <location>
        <position position="139"/>
    </location>
    <ligand>
        <name>[4Fe-4S] cluster</name>
        <dbReference type="ChEBI" id="CHEBI:49883"/>
        <note>4Fe-4S-S-AdoMet</note>
    </ligand>
</feature>
<feature type="binding site" evidence="1">
    <location>
        <position position="143"/>
    </location>
    <ligand>
        <name>[4Fe-4S] cluster</name>
        <dbReference type="ChEBI" id="CHEBI:49883"/>
        <note>4Fe-4S-S-AdoMet</note>
    </ligand>
</feature>
<feature type="binding site" evidence="1">
    <location>
        <position position="146"/>
    </location>
    <ligand>
        <name>[4Fe-4S] cluster</name>
        <dbReference type="ChEBI" id="CHEBI:49883"/>
        <note>4Fe-4S-S-AdoMet</note>
    </ligand>
</feature>
<feature type="binding site" evidence="1">
    <location>
        <begin position="194"/>
        <end position="195"/>
    </location>
    <ligand>
        <name>S-adenosyl-L-methionine</name>
        <dbReference type="ChEBI" id="CHEBI:59789"/>
    </ligand>
</feature>
<feature type="binding site" evidence="1">
    <location>
        <position position="226"/>
    </location>
    <ligand>
        <name>S-adenosyl-L-methionine</name>
        <dbReference type="ChEBI" id="CHEBI:59789"/>
    </ligand>
</feature>
<feature type="binding site" evidence="1">
    <location>
        <begin position="248"/>
        <end position="250"/>
    </location>
    <ligand>
        <name>S-adenosyl-L-methionine</name>
        <dbReference type="ChEBI" id="CHEBI:59789"/>
    </ligand>
</feature>
<feature type="binding site" evidence="1">
    <location>
        <position position="325"/>
    </location>
    <ligand>
        <name>S-adenosyl-L-methionine</name>
        <dbReference type="ChEBI" id="CHEBI:59789"/>
    </ligand>
</feature>
<feature type="disulfide bond" description="(transient)" evidence="1">
    <location>
        <begin position="132"/>
        <end position="368"/>
    </location>
</feature>
<dbReference type="EC" id="2.1.1.192" evidence="1"/>
<dbReference type="EMBL" id="CP001340">
    <property type="protein sequence ID" value="ACL93600.1"/>
    <property type="molecule type" value="Genomic_DNA"/>
</dbReference>
<dbReference type="RefSeq" id="WP_010918023.1">
    <property type="nucleotide sequence ID" value="NC_011916.1"/>
</dbReference>
<dbReference type="RefSeq" id="YP_002515508.1">
    <property type="nucleotide sequence ID" value="NC_011916.1"/>
</dbReference>
<dbReference type="SMR" id="B8GXM4"/>
<dbReference type="GeneID" id="7332387"/>
<dbReference type="KEGG" id="ccs:CCNA_00133"/>
<dbReference type="PATRIC" id="fig|565050.3.peg.132"/>
<dbReference type="HOGENOM" id="CLU_029101_0_0_5"/>
<dbReference type="OrthoDB" id="9793973at2"/>
<dbReference type="PhylomeDB" id="B8GXM4"/>
<dbReference type="Proteomes" id="UP000001364">
    <property type="component" value="Chromosome"/>
</dbReference>
<dbReference type="GO" id="GO:0005737">
    <property type="term" value="C:cytoplasm"/>
    <property type="evidence" value="ECO:0007669"/>
    <property type="project" value="UniProtKB-SubCell"/>
</dbReference>
<dbReference type="GO" id="GO:0051539">
    <property type="term" value="F:4 iron, 4 sulfur cluster binding"/>
    <property type="evidence" value="ECO:0007669"/>
    <property type="project" value="UniProtKB-UniRule"/>
</dbReference>
<dbReference type="GO" id="GO:0046872">
    <property type="term" value="F:metal ion binding"/>
    <property type="evidence" value="ECO:0007669"/>
    <property type="project" value="UniProtKB-KW"/>
</dbReference>
<dbReference type="GO" id="GO:0070040">
    <property type="term" value="F:rRNA (adenine(2503)-C2-)-methyltransferase activity"/>
    <property type="evidence" value="ECO:0007669"/>
    <property type="project" value="UniProtKB-UniRule"/>
</dbReference>
<dbReference type="GO" id="GO:0019843">
    <property type="term" value="F:rRNA binding"/>
    <property type="evidence" value="ECO:0007669"/>
    <property type="project" value="UniProtKB-UniRule"/>
</dbReference>
<dbReference type="GO" id="GO:0002935">
    <property type="term" value="F:tRNA (adenine(37)-C2)-methyltransferase activity"/>
    <property type="evidence" value="ECO:0007669"/>
    <property type="project" value="UniProtKB-UniRule"/>
</dbReference>
<dbReference type="GO" id="GO:0000049">
    <property type="term" value="F:tRNA binding"/>
    <property type="evidence" value="ECO:0007669"/>
    <property type="project" value="UniProtKB-UniRule"/>
</dbReference>
<dbReference type="GO" id="GO:0070475">
    <property type="term" value="P:rRNA base methylation"/>
    <property type="evidence" value="ECO:0007669"/>
    <property type="project" value="UniProtKB-UniRule"/>
</dbReference>
<dbReference type="GO" id="GO:0030488">
    <property type="term" value="P:tRNA methylation"/>
    <property type="evidence" value="ECO:0007669"/>
    <property type="project" value="UniProtKB-UniRule"/>
</dbReference>
<dbReference type="CDD" id="cd01335">
    <property type="entry name" value="Radical_SAM"/>
    <property type="match status" value="1"/>
</dbReference>
<dbReference type="FunFam" id="3.20.20.70:FF:000008">
    <property type="entry name" value="Dual-specificity RNA methyltransferase RlmN"/>
    <property type="match status" value="1"/>
</dbReference>
<dbReference type="Gene3D" id="1.10.150.530">
    <property type="match status" value="1"/>
</dbReference>
<dbReference type="Gene3D" id="3.20.20.70">
    <property type="entry name" value="Aldolase class I"/>
    <property type="match status" value="1"/>
</dbReference>
<dbReference type="HAMAP" id="MF_01849">
    <property type="entry name" value="RNA_methyltr_RlmN"/>
    <property type="match status" value="1"/>
</dbReference>
<dbReference type="InterPro" id="IPR013785">
    <property type="entry name" value="Aldolase_TIM"/>
</dbReference>
<dbReference type="InterPro" id="IPR040072">
    <property type="entry name" value="Methyltransferase_A"/>
</dbReference>
<dbReference type="InterPro" id="IPR048641">
    <property type="entry name" value="RlmN_N"/>
</dbReference>
<dbReference type="InterPro" id="IPR027492">
    <property type="entry name" value="RNA_MTrfase_RlmN"/>
</dbReference>
<dbReference type="InterPro" id="IPR004383">
    <property type="entry name" value="rRNA_lsu_MTrfase_RlmN/Cfr"/>
</dbReference>
<dbReference type="InterPro" id="IPR007197">
    <property type="entry name" value="rSAM"/>
</dbReference>
<dbReference type="NCBIfam" id="TIGR00048">
    <property type="entry name" value="rRNA_mod_RlmN"/>
    <property type="match status" value="1"/>
</dbReference>
<dbReference type="PANTHER" id="PTHR30544">
    <property type="entry name" value="23S RRNA METHYLTRANSFERASE"/>
    <property type="match status" value="1"/>
</dbReference>
<dbReference type="PANTHER" id="PTHR30544:SF5">
    <property type="entry name" value="RADICAL SAM CORE DOMAIN-CONTAINING PROTEIN"/>
    <property type="match status" value="1"/>
</dbReference>
<dbReference type="Pfam" id="PF04055">
    <property type="entry name" value="Radical_SAM"/>
    <property type="match status" value="1"/>
</dbReference>
<dbReference type="Pfam" id="PF21016">
    <property type="entry name" value="RlmN_N"/>
    <property type="match status" value="1"/>
</dbReference>
<dbReference type="PIRSF" id="PIRSF006004">
    <property type="entry name" value="CHP00048"/>
    <property type="match status" value="1"/>
</dbReference>
<dbReference type="SFLD" id="SFLDF00275">
    <property type="entry name" value="adenosine_C2_methyltransferase"/>
    <property type="match status" value="1"/>
</dbReference>
<dbReference type="SFLD" id="SFLDG01062">
    <property type="entry name" value="methyltransferase_(Class_A)"/>
    <property type="match status" value="1"/>
</dbReference>
<dbReference type="SUPFAM" id="SSF102114">
    <property type="entry name" value="Radical SAM enzymes"/>
    <property type="match status" value="1"/>
</dbReference>
<dbReference type="PROSITE" id="PS51918">
    <property type="entry name" value="RADICAL_SAM"/>
    <property type="match status" value="1"/>
</dbReference>
<sequence>MSVTLDLSRVSSDAAPATPVTKPLINLSGLTRPQLVAALVESGVVEHGKAKMRATQIFRWMHHRGVTDFADMSDVAKETRARLAEAFTIARPEIVERQVSKDGTRKWLIRMAPGIEVESVYIPGVGRAGALCVSSQVGCTLNCSFCHTGTQPLVRNLTAAEIVAQVQVAKDDLAEWPSDKEDRQLSNIVFMGMGEPLYNLGQVADAIEIISDNEGIAISRRRITVSTSGVVPMLEKLGSTTQAMLAISLHATNDPLRDVLVPLNKKYPIAELMAGIRAYPGLSNARRVTFEYVMLKGVNDSPEEARALVKLIKGIPAKINLIPFNPWPGSDYQCSDWATIEAFAAILNKAGYSSPIRTPRGRDILAACGQLKSESEKVRASALRKLSLAAMAGVLSDDDEDETA</sequence>
<reference key="1">
    <citation type="journal article" date="2010" name="J. Bacteriol.">
        <title>The genetic basis of laboratory adaptation in Caulobacter crescentus.</title>
        <authorList>
            <person name="Marks M.E."/>
            <person name="Castro-Rojas C.M."/>
            <person name="Teiling C."/>
            <person name="Du L."/>
            <person name="Kapatral V."/>
            <person name="Walunas T.L."/>
            <person name="Crosson S."/>
        </authorList>
    </citation>
    <scope>NUCLEOTIDE SEQUENCE [LARGE SCALE GENOMIC DNA]</scope>
    <source>
        <strain>NA1000 / CB15N</strain>
    </source>
</reference>